<proteinExistence type="inferred from homology"/>
<reference key="1">
    <citation type="journal article" date="1995" name="J. Mol. Evol.">
        <title>Evolutionary divergence of the cytochrome b5 gene of Drosophila.</title>
        <authorList>
            <person name="Kula M.E."/>
            <person name="Allay E.R."/>
            <person name="Rozek C.E."/>
        </authorList>
    </citation>
    <scope>NUCLEOTIDE SEQUENCE [GENOMIC DNA]</scope>
</reference>
<accession>P50266</accession>
<sequence length="142" mass="16707">MVIETWKKSGIATKFPTYRNSAPVTVHSWQKGKRQDVEAEGLWRIKDGIYDFTEFIDKHPGGTFWIRETKGTDITEAFEAHHLTTAPEKMIAKYKVRDAYQRIYTLTLHEDGFYKTLKERVREKLKTIDKRPKRKSDVSDDL</sequence>
<dbReference type="EMBL" id="U12418">
    <property type="protein sequence ID" value="AAA85492.1"/>
    <property type="molecule type" value="Genomic_DNA"/>
</dbReference>
<dbReference type="SMR" id="P50266"/>
<dbReference type="eggNOG" id="KOG4232">
    <property type="taxonomic scope" value="Eukaryota"/>
</dbReference>
<dbReference type="OrthoDB" id="260519at2759"/>
<dbReference type="ChiTaRS" id="Cyt-b5-r">
    <property type="organism name" value="fly"/>
</dbReference>
<dbReference type="GO" id="GO:0005739">
    <property type="term" value="C:mitochondrion"/>
    <property type="evidence" value="ECO:0007669"/>
    <property type="project" value="EnsemblMetazoa"/>
</dbReference>
<dbReference type="GO" id="GO:0020037">
    <property type="term" value="F:heme binding"/>
    <property type="evidence" value="ECO:0007669"/>
    <property type="project" value="InterPro"/>
</dbReference>
<dbReference type="GO" id="GO:0046872">
    <property type="term" value="F:metal ion binding"/>
    <property type="evidence" value="ECO:0007669"/>
    <property type="project" value="UniProtKB-KW"/>
</dbReference>
<dbReference type="FunFam" id="3.10.120.10:FF:000020">
    <property type="entry name" value="Cytochrome b5-related protein"/>
    <property type="match status" value="1"/>
</dbReference>
<dbReference type="Gene3D" id="3.10.120.10">
    <property type="entry name" value="Cytochrome b5-like heme/steroid binding domain"/>
    <property type="match status" value="1"/>
</dbReference>
<dbReference type="InterPro" id="IPR001199">
    <property type="entry name" value="Cyt_B5-like_heme/steroid-bd"/>
</dbReference>
<dbReference type="InterPro" id="IPR036400">
    <property type="entry name" value="Cyt_B5-like_heme/steroid_sf"/>
</dbReference>
<dbReference type="InterPro" id="IPR018506">
    <property type="entry name" value="Cyt_B5_heme-BS"/>
</dbReference>
<dbReference type="InterPro" id="IPR053100">
    <property type="entry name" value="Cytochrome_b5-related"/>
</dbReference>
<dbReference type="PANTHER" id="PTHR16740">
    <property type="entry name" value="CYTOCHROME B5-RELATED PROTEIN-RELATED"/>
    <property type="match status" value="1"/>
</dbReference>
<dbReference type="PANTHER" id="PTHR16740:SF1">
    <property type="entry name" value="CYTOCHROME B5-RELATED PROTEIN-RELATED"/>
    <property type="match status" value="1"/>
</dbReference>
<dbReference type="Pfam" id="PF00173">
    <property type="entry name" value="Cyt-b5"/>
    <property type="match status" value="1"/>
</dbReference>
<dbReference type="PRINTS" id="PR00363">
    <property type="entry name" value="CYTOCHROMEB5"/>
</dbReference>
<dbReference type="SMART" id="SM01117">
    <property type="entry name" value="Cyt-b5"/>
    <property type="match status" value="1"/>
</dbReference>
<dbReference type="SUPFAM" id="SSF55856">
    <property type="entry name" value="Cytochrome b5-like heme/steroid binding domain"/>
    <property type="match status" value="1"/>
</dbReference>
<dbReference type="PROSITE" id="PS00191">
    <property type="entry name" value="CYTOCHROME_B5_1"/>
    <property type="match status" value="1"/>
</dbReference>
<dbReference type="PROSITE" id="PS50255">
    <property type="entry name" value="CYTOCHROME_B5_2"/>
    <property type="match status" value="1"/>
</dbReference>
<name>CYB5R_DROVI</name>
<protein>
    <recommendedName>
        <fullName>Cytochrome b5-related protein</fullName>
    </recommendedName>
</protein>
<organism>
    <name type="scientific">Drosophila virilis</name>
    <name type="common">Fruit fly</name>
    <dbReference type="NCBI Taxonomy" id="7244"/>
    <lineage>
        <taxon>Eukaryota</taxon>
        <taxon>Metazoa</taxon>
        <taxon>Ecdysozoa</taxon>
        <taxon>Arthropoda</taxon>
        <taxon>Hexapoda</taxon>
        <taxon>Insecta</taxon>
        <taxon>Pterygota</taxon>
        <taxon>Neoptera</taxon>
        <taxon>Endopterygota</taxon>
        <taxon>Diptera</taxon>
        <taxon>Brachycera</taxon>
        <taxon>Muscomorpha</taxon>
        <taxon>Ephydroidea</taxon>
        <taxon>Drosophilidae</taxon>
        <taxon>Drosophila</taxon>
    </lineage>
</organism>
<feature type="chain" id="PRO_0000166019" description="Cytochrome b5-related protein">
    <location>
        <begin position="1"/>
        <end position="142"/>
    </location>
</feature>
<feature type="domain" description="Cytochrome b5 heme-binding" evidence="2">
    <location>
        <begin position="16"/>
        <end position="100"/>
    </location>
</feature>
<feature type="binding site" description="axial binding residue" evidence="2">
    <location>
        <position position="59"/>
    </location>
    <ligand>
        <name>heme</name>
        <dbReference type="ChEBI" id="CHEBI:30413"/>
    </ligand>
    <ligandPart>
        <name>Fe</name>
        <dbReference type="ChEBI" id="CHEBI:18248"/>
    </ligandPart>
</feature>
<feature type="binding site" description="axial binding residue" evidence="2">
    <location>
        <position position="82"/>
    </location>
    <ligand>
        <name>heme</name>
        <dbReference type="ChEBI" id="CHEBI:30413"/>
    </ligand>
    <ligandPart>
        <name>Fe</name>
        <dbReference type="ChEBI" id="CHEBI:18248"/>
    </ligandPart>
</feature>
<keyword id="KW-0349">Heme</keyword>
<keyword id="KW-0408">Iron</keyword>
<keyword id="KW-0479">Metal-binding</keyword>
<comment type="function">
    <text evidence="1">May play a role in muscle cell metabolism.</text>
</comment>
<comment type="similarity">
    <text evidence="3">Belongs to the cytochrome b5 family.</text>
</comment>
<evidence type="ECO:0000250" key="1"/>
<evidence type="ECO:0000255" key="2">
    <source>
        <dbReference type="PROSITE-ProRule" id="PRU00279"/>
    </source>
</evidence>
<evidence type="ECO:0000305" key="3"/>
<gene>
    <name type="primary">Cyt-b5-r</name>
</gene>